<comment type="function">
    <text evidence="7">Adenylyl cyclase that catalyzes the formation of the signaling molecule cAMP in response to activation of G protein-coupled receptors.</text>
</comment>
<comment type="catalytic activity">
    <reaction evidence="7">
        <text>ATP = 3',5'-cyclic AMP + diphosphate</text>
        <dbReference type="Rhea" id="RHEA:15389"/>
        <dbReference type="ChEBI" id="CHEBI:30616"/>
        <dbReference type="ChEBI" id="CHEBI:33019"/>
        <dbReference type="ChEBI" id="CHEBI:58165"/>
        <dbReference type="EC" id="4.6.1.1"/>
    </reaction>
</comment>
<comment type="cofactor">
    <cofactor evidence="3">
        <name>Mg(2+)</name>
        <dbReference type="ChEBI" id="CHEBI:18420"/>
    </cofactor>
    <cofactor evidence="3">
        <name>Mn(2+)</name>
        <dbReference type="ChEBI" id="CHEBI:29035"/>
    </cofactor>
    <text evidence="3">Binds 2 magnesium ions per subunit. Is also active with manganese (in vitro).</text>
</comment>
<comment type="activity regulation">
    <text evidence="1">Insensitive to calcium/calmodulin, forskolin and somatostatin. Stimulated by beta-adrenergic receptor activation. Activity is down-regulated by calcium/calcineurin.</text>
</comment>
<comment type="subcellular location">
    <subcellularLocation>
        <location evidence="1">Cell membrane</location>
        <topology evidence="1">Multi-pass membrane protein</topology>
    </subcellularLocation>
    <subcellularLocation>
        <location evidence="7">Membrane</location>
        <topology evidence="9">Multi-pass membrane protein</topology>
    </subcellularLocation>
</comment>
<comment type="tissue specificity">
    <text evidence="7">Detected in embryonic heart (at protein level).</text>
</comment>
<comment type="domain">
    <text evidence="2">The protein contains two modules with six transmembrane helices each; both are required for catalytic activity. Isolated N-terminal or C-terminal guanylate cyclase domains have no catalytic activity, but when they are brought together, enzyme activity is restored. The active site is at the interface of the two domains. Both contribute substrate-binding residues, but the catalytic metal ions are bound exclusively via the N-terminal guanylate cyclase domain.</text>
</comment>
<comment type="similarity">
    <text evidence="5">Belongs to the adenylyl cyclase class-4/guanylyl cyclase family.</text>
</comment>
<organism>
    <name type="scientific">Gallus gallus</name>
    <name type="common">Chicken</name>
    <dbReference type="NCBI Taxonomy" id="9031"/>
    <lineage>
        <taxon>Eukaryota</taxon>
        <taxon>Metazoa</taxon>
        <taxon>Chordata</taxon>
        <taxon>Craniata</taxon>
        <taxon>Vertebrata</taxon>
        <taxon>Euteleostomi</taxon>
        <taxon>Archelosauria</taxon>
        <taxon>Archosauria</taxon>
        <taxon>Dinosauria</taxon>
        <taxon>Saurischia</taxon>
        <taxon>Theropoda</taxon>
        <taxon>Coelurosauria</taxon>
        <taxon>Aves</taxon>
        <taxon>Neognathae</taxon>
        <taxon>Galloanserae</taxon>
        <taxon>Galliformes</taxon>
        <taxon>Phasianidae</taxon>
        <taxon>Phasianinae</taxon>
        <taxon>Gallus</taxon>
    </lineage>
</organism>
<feature type="chain" id="PRO_0000195710" description="Adenylate cyclase type 9">
    <location>
        <begin position="1"/>
        <end position="1334"/>
    </location>
</feature>
<feature type="topological domain" description="Cytoplasmic" evidence="4">
    <location>
        <begin position="1"/>
        <end position="113"/>
    </location>
</feature>
<feature type="transmembrane region" description="Helical" evidence="4">
    <location>
        <begin position="114"/>
        <end position="134"/>
    </location>
</feature>
<feature type="topological domain" description="Extracellular" evidence="4">
    <location>
        <begin position="135"/>
        <end position="137"/>
    </location>
</feature>
<feature type="transmembrane region" description="Helical" evidence="4">
    <location>
        <begin position="138"/>
        <end position="158"/>
    </location>
</feature>
<feature type="topological domain" description="Cytoplasmic" evidence="4">
    <location>
        <begin position="159"/>
        <end position="167"/>
    </location>
</feature>
<feature type="transmembrane region" description="Helical" evidence="4">
    <location>
        <begin position="168"/>
        <end position="187"/>
    </location>
</feature>
<feature type="topological domain" description="Extracellular" evidence="4">
    <location>
        <begin position="188"/>
        <end position="207"/>
    </location>
</feature>
<feature type="transmembrane region" description="Helical" evidence="4">
    <location>
        <begin position="208"/>
        <end position="227"/>
    </location>
</feature>
<feature type="topological domain" description="Cytoplasmic" evidence="4">
    <location>
        <begin position="228"/>
        <end position="233"/>
    </location>
</feature>
<feature type="transmembrane region" description="Helical" evidence="4">
    <location>
        <begin position="234"/>
        <end position="250"/>
    </location>
</feature>
<feature type="topological domain" description="Extracellular" evidence="4">
    <location>
        <begin position="251"/>
        <end position="269"/>
    </location>
</feature>
<feature type="transmembrane region" description="Helical" evidence="4">
    <location>
        <begin position="270"/>
        <end position="290"/>
    </location>
</feature>
<feature type="topological domain" description="Cytoplasmic" evidence="4">
    <location>
        <begin position="291"/>
        <end position="768"/>
    </location>
</feature>
<feature type="transmembrane region" description="Helical" evidence="4">
    <location>
        <begin position="769"/>
        <end position="789"/>
    </location>
</feature>
<feature type="topological domain" description="Extracellular" evidence="4">
    <location>
        <begin position="790"/>
        <end position="800"/>
    </location>
</feature>
<feature type="transmembrane region" description="Helical" evidence="4">
    <location>
        <begin position="801"/>
        <end position="821"/>
    </location>
</feature>
<feature type="topological domain" description="Cytoplasmic" evidence="4">
    <location>
        <begin position="822"/>
        <end position="849"/>
    </location>
</feature>
<feature type="transmembrane region" description="Helical" evidence="4">
    <location>
        <begin position="850"/>
        <end position="870"/>
    </location>
</feature>
<feature type="topological domain" description="Extracellular" evidence="4">
    <location>
        <begin position="871"/>
        <end position="873"/>
    </location>
</feature>
<feature type="transmembrane region" description="Helical" evidence="4">
    <location>
        <begin position="874"/>
        <end position="894"/>
    </location>
</feature>
<feature type="topological domain" description="Cytoplasmic" evidence="4">
    <location>
        <begin position="895"/>
        <end position="902"/>
    </location>
</feature>
<feature type="transmembrane region" description="Helical" evidence="4">
    <location>
        <begin position="903"/>
        <end position="923"/>
    </location>
</feature>
<feature type="topological domain" description="Extracellular" evidence="4">
    <location>
        <begin position="924"/>
        <end position="957"/>
    </location>
</feature>
<feature type="transmembrane region" description="Helical" evidence="4">
    <location>
        <begin position="958"/>
        <end position="978"/>
    </location>
</feature>
<feature type="topological domain" description="Cytoplasmic" evidence="4">
    <location>
        <begin position="979"/>
        <end position="1334"/>
    </location>
</feature>
<feature type="region of interest" description="Disordered" evidence="6">
    <location>
        <begin position="1"/>
        <end position="28"/>
    </location>
</feature>
<feature type="region of interest" description="Disordered" evidence="6">
    <location>
        <begin position="49"/>
        <end position="71"/>
    </location>
</feature>
<feature type="region of interest" description="Disordered" evidence="6">
    <location>
        <begin position="338"/>
        <end position="363"/>
    </location>
</feature>
<feature type="region of interest" description="Disordered" evidence="6">
    <location>
        <begin position="635"/>
        <end position="670"/>
    </location>
</feature>
<feature type="region of interest" description="Disordered" evidence="6">
    <location>
        <begin position="1266"/>
        <end position="1303"/>
    </location>
</feature>
<feature type="compositionally biased region" description="Polar residues" evidence="6">
    <location>
        <begin position="16"/>
        <end position="28"/>
    </location>
</feature>
<feature type="compositionally biased region" description="Gly residues" evidence="6">
    <location>
        <begin position="57"/>
        <end position="69"/>
    </location>
</feature>
<feature type="compositionally biased region" description="Basic residues" evidence="6">
    <location>
        <begin position="348"/>
        <end position="363"/>
    </location>
</feature>
<feature type="compositionally biased region" description="Basic and acidic residues" evidence="6">
    <location>
        <begin position="1272"/>
        <end position="1284"/>
    </location>
</feature>
<feature type="compositionally biased region" description="Basic and acidic residues" evidence="6">
    <location>
        <begin position="1292"/>
        <end position="1303"/>
    </location>
</feature>
<feature type="binding site" evidence="3">
    <location>
        <begin position="388"/>
        <end position="393"/>
    </location>
    <ligand>
        <name>ATP</name>
        <dbReference type="ChEBI" id="CHEBI:30616"/>
    </ligand>
</feature>
<feature type="binding site" evidence="5">
    <location>
        <position position="388"/>
    </location>
    <ligand>
        <name>Mg(2+)</name>
        <dbReference type="ChEBI" id="CHEBI:18420"/>
        <label>1</label>
        <note>catalytic</note>
    </ligand>
</feature>
<feature type="binding site" evidence="5">
    <location>
        <position position="388"/>
    </location>
    <ligand>
        <name>Mg(2+)</name>
        <dbReference type="ChEBI" id="CHEBI:18420"/>
        <label>2</label>
        <note>catalytic</note>
    </ligand>
</feature>
<feature type="binding site" evidence="5">
    <location>
        <position position="389"/>
    </location>
    <ligand>
        <name>Mg(2+)</name>
        <dbReference type="ChEBI" id="CHEBI:18420"/>
        <label>2</label>
        <note>catalytic</note>
    </ligand>
</feature>
<feature type="binding site" evidence="3">
    <location>
        <begin position="430"/>
        <end position="432"/>
    </location>
    <ligand>
        <name>ATP</name>
        <dbReference type="ChEBI" id="CHEBI:30616"/>
    </ligand>
</feature>
<feature type="binding site" evidence="5">
    <location>
        <position position="432"/>
    </location>
    <ligand>
        <name>Mg(2+)</name>
        <dbReference type="ChEBI" id="CHEBI:18420"/>
        <label>1</label>
        <note>catalytic</note>
    </ligand>
</feature>
<feature type="binding site" evidence="5">
    <location>
        <position position="432"/>
    </location>
    <ligand>
        <name>Mg(2+)</name>
        <dbReference type="ChEBI" id="CHEBI:18420"/>
        <label>2</label>
        <note>catalytic</note>
    </ligand>
</feature>
<feature type="binding site" evidence="3">
    <location>
        <position position="476"/>
    </location>
    <ligand>
        <name>ATP</name>
        <dbReference type="ChEBI" id="CHEBI:30616"/>
    </ligand>
</feature>
<feature type="binding site" evidence="2">
    <location>
        <position position="1090"/>
    </location>
    <ligand>
        <name>ATP</name>
        <dbReference type="ChEBI" id="CHEBI:30616"/>
    </ligand>
</feature>
<feature type="binding site" evidence="2">
    <location>
        <begin position="1167"/>
        <end position="1169"/>
    </location>
    <ligand>
        <name>ATP</name>
        <dbReference type="ChEBI" id="CHEBI:30616"/>
    </ligand>
</feature>
<feature type="binding site" evidence="2">
    <location>
        <begin position="1174"/>
        <end position="1178"/>
    </location>
    <ligand>
        <name>ATP</name>
        <dbReference type="ChEBI" id="CHEBI:30616"/>
    </ligand>
</feature>
<feature type="binding site" evidence="2">
    <location>
        <position position="1214"/>
    </location>
    <ligand>
        <name>ATP</name>
        <dbReference type="ChEBI" id="CHEBI:30616"/>
    </ligand>
</feature>
<feature type="glycosylation site" description="N-linked (GlcNAc...) asparagine" evidence="4">
    <location>
        <position position="937"/>
    </location>
</feature>
<feature type="glycosylation site" description="N-linked (GlcNAc...) asparagine" evidence="4">
    <location>
        <position position="946"/>
    </location>
</feature>
<protein>
    <recommendedName>
        <fullName>Adenylate cyclase type 9</fullName>
        <ecNumber evidence="7">4.6.1.1</ecNumber>
    </recommendedName>
    <alternativeName>
        <fullName>ATP pyrophosphate-lyase 9</fullName>
    </alternativeName>
    <alternativeName>
        <fullName evidence="8">Adenylate cyclase type IX</fullName>
    </alternativeName>
    <alternativeName>
        <fullName>Adenylyl cyclase 9</fullName>
    </alternativeName>
</protein>
<proteinExistence type="evidence at protein level"/>
<evidence type="ECO:0000250" key="1">
    <source>
        <dbReference type="UniProtKB" id="O60503"/>
    </source>
</evidence>
<evidence type="ECO:0000250" key="2">
    <source>
        <dbReference type="UniProtKB" id="P26769"/>
    </source>
</evidence>
<evidence type="ECO:0000250" key="3">
    <source>
        <dbReference type="UniProtKB" id="P30803"/>
    </source>
</evidence>
<evidence type="ECO:0000255" key="4"/>
<evidence type="ECO:0000255" key="5">
    <source>
        <dbReference type="PROSITE-ProRule" id="PRU00099"/>
    </source>
</evidence>
<evidence type="ECO:0000256" key="6">
    <source>
        <dbReference type="SAM" id="MobiDB-lite"/>
    </source>
</evidence>
<evidence type="ECO:0000269" key="7">
    <source>
    </source>
</evidence>
<evidence type="ECO:0000303" key="8">
    <source>
    </source>
</evidence>
<evidence type="ECO:0000305" key="9"/>
<reference key="1">
    <citation type="journal article" date="2001" name="Biochem. Biophys. Res. Commun.">
        <title>Cell-specific properties of type V and type IX adenylyl cyclase isozymes in 293T cells and embryonic chick ventricular myocytes.</title>
        <authorList>
            <person name="Cui H."/>
            <person name="Green R.D."/>
        </authorList>
    </citation>
    <scope>NUCLEOTIDE SEQUENCE [MRNA]</scope>
    <scope>FUNCTION</scope>
    <scope>CATALYTIC ACTIVITY</scope>
    <scope>TISSUE SPECIFICITY</scope>
    <scope>SUBCELLULAR LOCATION</scope>
    <source>
        <tissue>Heart</tissue>
    </source>
</reference>
<accession>Q9DGG6</accession>
<keyword id="KW-0067">ATP-binding</keyword>
<keyword id="KW-0115">cAMP biosynthesis</keyword>
<keyword id="KW-1003">Cell membrane</keyword>
<keyword id="KW-0325">Glycoprotein</keyword>
<keyword id="KW-0456">Lyase</keyword>
<keyword id="KW-0460">Magnesium</keyword>
<keyword id="KW-0464">Manganese</keyword>
<keyword id="KW-0472">Membrane</keyword>
<keyword id="KW-0479">Metal-binding</keyword>
<keyword id="KW-0547">Nucleotide-binding</keyword>
<keyword id="KW-0597">Phosphoprotein</keyword>
<keyword id="KW-1185">Reference proteome</keyword>
<keyword id="KW-0677">Repeat</keyword>
<keyword id="KW-0812">Transmembrane</keyword>
<keyword id="KW-1133">Transmembrane helix</keyword>
<name>ADCY9_CHICK</name>
<sequence>MASPPHQQLLHHHSTEVSCDSSGDSNSVTVRINPRQQQALSAKRCKYSISSSCSSGESGGVGRGGGGGLRRQKKLPQLFERASSRWWDPKFDSTNLEEASMERCFPQTQRRFRYALFYIGSACLLWGIYFGVHMREKQMVFMVPALCFLLVCVAFFAFTFTKAYARRYVWTSGYTLLVFALTLAPQFQPWTLGERQRVQPRPAAPVDTCLSQVGSFSMCVEVLLLLYTVMHLPLYLSLFLGLSYSVLFETSAFRDESCTLLGGGAVYWELLSKAFLHVCIHAIGIHLFIMSEVRSRSTFLKVGQSIMHGKDLEVEKALKERMIHSVMPRIIADDLMKQGDDESENSVKRHSTSSPKNRKKKPSIQKTPIIFRPFKMQQIEQVSILFADIVGFTKMSANKSAHALVGLLNDLFGRFDRLCEDTKCEKISTLGDCYYCVAGCPEPRADHAYCCIEMGLGMIKAIEQFCQEKKEMVNMRVGVHTGTVLCGILGMRRFKFDVWSNDVNLANLMEQLGVAGKVHISEATAKYLDDRYEMEDGKVTERVGQSAVADQLKGLKTYLISGQKVKEPHCSCSQALLQLGGWGWSQMQAAPSAENTADSTKALKHVEKPKPCPSCSTTLVPPCDVSIDEGAIQNGCQDEHKNSTKAPGGHSPKTQNGLLSPPQEEKLSNSQTSLYEMLQEKGRWGGVSLDQSALLPLRFKNIREKTDAHFVDVIKEDSLMKDYFFKPPISKLSLNFLDQDLEMAYRTSYQEEVMRNAPVKTFASATFSSLLDVFLSTTVFLILSVTCFLKHGMVASPPPPAAVVVFVIAILLEVLSLVISVRMVFFLEEVMACTKRLLELISGWLPRHFLGAILVSLPALAVFSHFTSDFETNIHYTMFMCCAILIAIVQYCNFCQLSSWMRSLLATVVGAVLLILLYVSLCPDSSVETLHLDLAQNLSSRKSPCNSSMPADVKRPADLIGQEVILAVFLLLLLVWFLNRSFEVSYRLHYHGDVEADLHRTKIQSMRDQPDSCVRNIIPYHVADELKVSQSYSKNHDSGGVIFASIVNFSEFYEENYEGGKECYRVLNELIGDFDELLSKPHYSSIEKIKTIGATYMAASGLNTSQCQDSNHPHGHLQTLFEFAKEMMRVVDDFNNNMLWFNFKLRIGFNHGPLTAGVIGTTKLLYDIWGDTVNIASRMDTIGVECRIQVSEETYRILSKMGYDFDYRGTVNVKGKGQMKTYLYPKCMDNGIVPHHQLSISPDIRVQVDGSIGRSPTDEIANLVPSVQNSDKTAHATDNSETKDALPSSKKLQKEPTKAEERCRFGKAVEKTDCEEAGTEEVNELTKLNVSKSV</sequence>
<dbReference type="EC" id="4.6.1.1" evidence="7"/>
<dbReference type="EMBL" id="AJ401469">
    <property type="protein sequence ID" value="CAC04147.1"/>
    <property type="molecule type" value="mRNA"/>
</dbReference>
<dbReference type="SMR" id="Q9DGG6"/>
<dbReference type="FunCoup" id="Q9DGG6">
    <property type="interactions" value="615"/>
</dbReference>
<dbReference type="STRING" id="9031.ENSGALP00000012606"/>
<dbReference type="GlyCosmos" id="Q9DGG6">
    <property type="glycosylation" value="2 sites, No reported glycans"/>
</dbReference>
<dbReference type="GlyGen" id="Q9DGG6">
    <property type="glycosylation" value="2 sites"/>
</dbReference>
<dbReference type="VEuPathDB" id="HostDB:geneid_395339"/>
<dbReference type="eggNOG" id="KOG3618">
    <property type="taxonomic scope" value="Eukaryota"/>
</dbReference>
<dbReference type="InParanoid" id="Q9DGG6"/>
<dbReference type="OrthoDB" id="60033at2759"/>
<dbReference type="PhylomeDB" id="Q9DGG6"/>
<dbReference type="Proteomes" id="UP000000539">
    <property type="component" value="Unassembled WGS sequence"/>
</dbReference>
<dbReference type="GO" id="GO:0016020">
    <property type="term" value="C:membrane"/>
    <property type="evidence" value="ECO:0000250"/>
    <property type="project" value="UniProtKB"/>
</dbReference>
<dbReference type="GO" id="GO:0005886">
    <property type="term" value="C:plasma membrane"/>
    <property type="evidence" value="ECO:0000250"/>
    <property type="project" value="UniProtKB"/>
</dbReference>
<dbReference type="GO" id="GO:0004016">
    <property type="term" value="F:adenylate cyclase activity"/>
    <property type="evidence" value="ECO:0000250"/>
    <property type="project" value="UniProtKB"/>
</dbReference>
<dbReference type="GO" id="GO:0005524">
    <property type="term" value="F:ATP binding"/>
    <property type="evidence" value="ECO:0007669"/>
    <property type="project" value="UniProtKB-KW"/>
</dbReference>
<dbReference type="GO" id="GO:0046872">
    <property type="term" value="F:metal ion binding"/>
    <property type="evidence" value="ECO:0007669"/>
    <property type="project" value="UniProtKB-KW"/>
</dbReference>
<dbReference type="GO" id="GO:0071880">
    <property type="term" value="P:adenylate cyclase-activating adrenergic receptor signaling pathway"/>
    <property type="evidence" value="ECO:0000250"/>
    <property type="project" value="UniProtKB"/>
</dbReference>
<dbReference type="GO" id="GO:0007189">
    <property type="term" value="P:adenylate cyclase-activating G protein-coupled receptor signaling pathway"/>
    <property type="evidence" value="ECO:0000250"/>
    <property type="project" value="UniProtKB"/>
</dbReference>
<dbReference type="GO" id="GO:0006171">
    <property type="term" value="P:cAMP biosynthetic process"/>
    <property type="evidence" value="ECO:0000250"/>
    <property type="project" value="UniProtKB"/>
</dbReference>
<dbReference type="GO" id="GO:0035556">
    <property type="term" value="P:intracellular signal transduction"/>
    <property type="evidence" value="ECO:0007669"/>
    <property type="project" value="InterPro"/>
</dbReference>
<dbReference type="CDD" id="cd07302">
    <property type="entry name" value="CHD"/>
    <property type="match status" value="2"/>
</dbReference>
<dbReference type="FunFam" id="3.30.70.1230:FF:000008">
    <property type="entry name" value="Adenylate cyclase type 9"/>
    <property type="match status" value="1"/>
</dbReference>
<dbReference type="FunFam" id="3.30.70.1230:FF:000014">
    <property type="entry name" value="adenylate cyclase type 9"/>
    <property type="match status" value="1"/>
</dbReference>
<dbReference type="Gene3D" id="3.30.70.1230">
    <property type="entry name" value="Nucleotide cyclase"/>
    <property type="match status" value="2"/>
</dbReference>
<dbReference type="InterPro" id="IPR001054">
    <property type="entry name" value="A/G_cyclase"/>
</dbReference>
<dbReference type="InterPro" id="IPR018297">
    <property type="entry name" value="A/G_cyclase_CS"/>
</dbReference>
<dbReference type="InterPro" id="IPR029787">
    <property type="entry name" value="Nucleotide_cyclase"/>
</dbReference>
<dbReference type="PANTHER" id="PTHR45627">
    <property type="entry name" value="ADENYLATE CYCLASE TYPE 1"/>
    <property type="match status" value="1"/>
</dbReference>
<dbReference type="PANTHER" id="PTHR45627:SF8">
    <property type="entry name" value="ADENYLATE CYCLASE TYPE 9"/>
    <property type="match status" value="1"/>
</dbReference>
<dbReference type="Pfam" id="PF00211">
    <property type="entry name" value="Guanylate_cyc"/>
    <property type="match status" value="2"/>
</dbReference>
<dbReference type="SMART" id="SM00044">
    <property type="entry name" value="CYCc"/>
    <property type="match status" value="2"/>
</dbReference>
<dbReference type="SUPFAM" id="SSF55073">
    <property type="entry name" value="Nucleotide cyclase"/>
    <property type="match status" value="2"/>
</dbReference>
<dbReference type="PROSITE" id="PS00452">
    <property type="entry name" value="GUANYLATE_CYCLASE_1"/>
    <property type="match status" value="2"/>
</dbReference>
<dbReference type="PROSITE" id="PS50125">
    <property type="entry name" value="GUANYLATE_CYCLASE_2"/>
    <property type="match status" value="2"/>
</dbReference>
<gene>
    <name type="primary">ADCY9</name>
</gene>